<reference key="1">
    <citation type="submission" date="2006-12" db="EMBL/GenBank/DDBJ databases">
        <authorList>
            <person name="Hendrix L."/>
            <person name="Mohamoud Y."/>
            <person name="Radune D."/>
            <person name="Shvartsbeyn A."/>
            <person name="Daugherty S."/>
            <person name="Dodson R."/>
            <person name="Durkin A.S."/>
            <person name="Harkins D."/>
            <person name="Huot H."/>
            <person name="Kothari S.P."/>
            <person name="Madupu R."/>
            <person name="Li J."/>
            <person name="Nelson W.C."/>
            <person name="Shrivastava S."/>
            <person name="Giglio M.G."/>
            <person name="Haft D."/>
            <person name="Selengut J."/>
            <person name="Fraser-Ligget C."/>
            <person name="Seshadri R."/>
        </authorList>
    </citation>
    <scope>NUCLEOTIDE SEQUENCE [LARGE SCALE GENOMIC DNA]</scope>
    <source>
        <strain>ATCC 35685 / KC583 / Herrer 020/F12,63</strain>
    </source>
</reference>
<organism>
    <name type="scientific">Bartonella bacilliformis (strain ATCC 35685 / KC583 / Herrer 020/F12,63)</name>
    <dbReference type="NCBI Taxonomy" id="360095"/>
    <lineage>
        <taxon>Bacteria</taxon>
        <taxon>Pseudomonadati</taxon>
        <taxon>Pseudomonadota</taxon>
        <taxon>Alphaproteobacteria</taxon>
        <taxon>Hyphomicrobiales</taxon>
        <taxon>Bartonellaceae</taxon>
        <taxon>Bartonella</taxon>
    </lineage>
</organism>
<sequence length="391" mass="43150">MFLNSLDLPGPPENSRVVVAMSGGVDSSVVAGLLKREGYDVVGITLQLYDHGAATHRAGACCAGQDIEDARRVAETLRIPYYVLDYESRFREAVIDPFAESYARGETPIPCVACNQTVKFADLLVTARELGADALATGHYIRSVSYGTHRALFRPLDSERDQSYFLFATTQEQIDYLRFPLGNLPKARVREIAKEMGLTVADKHDSQDICFVPQGKYSDVIAKLRPEASNPGDIVHINGQILGQHSGIINYTVGQRRGIGVATGEALYVIFLDVENARVIVGPREMLETHKLFLRDVNWLGDERLENFPSDCIDVAAKIRSTRPPRPARLYYKEGIFSVDLLEGESSVAPGQACVFYNESGDGARVLGGGFITHSERSTDAEERLQRVLHN</sequence>
<comment type="function">
    <text evidence="1">Catalyzes the 2-thiolation of uridine at the wobble position (U34) of tRNA, leading to the formation of s(2)U34.</text>
</comment>
<comment type="catalytic activity">
    <reaction evidence="1">
        <text>S-sulfanyl-L-cysteinyl-[protein] + uridine(34) in tRNA + AH2 + ATP = 2-thiouridine(34) in tRNA + L-cysteinyl-[protein] + A + AMP + diphosphate + H(+)</text>
        <dbReference type="Rhea" id="RHEA:47032"/>
        <dbReference type="Rhea" id="RHEA-COMP:10131"/>
        <dbReference type="Rhea" id="RHEA-COMP:11726"/>
        <dbReference type="Rhea" id="RHEA-COMP:11727"/>
        <dbReference type="Rhea" id="RHEA-COMP:11728"/>
        <dbReference type="ChEBI" id="CHEBI:13193"/>
        <dbReference type="ChEBI" id="CHEBI:15378"/>
        <dbReference type="ChEBI" id="CHEBI:17499"/>
        <dbReference type="ChEBI" id="CHEBI:29950"/>
        <dbReference type="ChEBI" id="CHEBI:30616"/>
        <dbReference type="ChEBI" id="CHEBI:33019"/>
        <dbReference type="ChEBI" id="CHEBI:61963"/>
        <dbReference type="ChEBI" id="CHEBI:65315"/>
        <dbReference type="ChEBI" id="CHEBI:87170"/>
        <dbReference type="ChEBI" id="CHEBI:456215"/>
        <dbReference type="EC" id="2.8.1.13"/>
    </reaction>
</comment>
<comment type="subcellular location">
    <subcellularLocation>
        <location evidence="1">Cytoplasm</location>
    </subcellularLocation>
</comment>
<comment type="similarity">
    <text evidence="1">Belongs to the MnmA/TRMU family.</text>
</comment>
<dbReference type="EC" id="2.8.1.13" evidence="1"/>
<dbReference type="EMBL" id="CP000524">
    <property type="protein sequence ID" value="ABM45485.1"/>
    <property type="molecule type" value="Genomic_DNA"/>
</dbReference>
<dbReference type="RefSeq" id="WP_005767552.1">
    <property type="nucleotide sequence ID" value="NC_008783.1"/>
</dbReference>
<dbReference type="SMR" id="A1UTJ1"/>
<dbReference type="STRING" id="360095.BARBAKC583_1016"/>
<dbReference type="GeneID" id="4685086"/>
<dbReference type="KEGG" id="bbk:BARBAKC583_1016"/>
<dbReference type="PATRIC" id="fig|360095.6.peg.984"/>
<dbReference type="eggNOG" id="COG0482">
    <property type="taxonomic scope" value="Bacteria"/>
</dbReference>
<dbReference type="HOGENOM" id="CLU_035188_0_1_5"/>
<dbReference type="OrthoDB" id="9800696at2"/>
<dbReference type="Proteomes" id="UP000000643">
    <property type="component" value="Chromosome"/>
</dbReference>
<dbReference type="GO" id="GO:0005737">
    <property type="term" value="C:cytoplasm"/>
    <property type="evidence" value="ECO:0007669"/>
    <property type="project" value="UniProtKB-SubCell"/>
</dbReference>
<dbReference type="GO" id="GO:0005524">
    <property type="term" value="F:ATP binding"/>
    <property type="evidence" value="ECO:0007669"/>
    <property type="project" value="UniProtKB-KW"/>
</dbReference>
<dbReference type="GO" id="GO:0000049">
    <property type="term" value="F:tRNA binding"/>
    <property type="evidence" value="ECO:0007669"/>
    <property type="project" value="UniProtKB-KW"/>
</dbReference>
<dbReference type="GO" id="GO:0103016">
    <property type="term" value="F:tRNA-uridine 2-sulfurtransferase activity"/>
    <property type="evidence" value="ECO:0007669"/>
    <property type="project" value="UniProtKB-EC"/>
</dbReference>
<dbReference type="GO" id="GO:0002143">
    <property type="term" value="P:tRNA wobble position uridine thiolation"/>
    <property type="evidence" value="ECO:0007669"/>
    <property type="project" value="TreeGrafter"/>
</dbReference>
<dbReference type="CDD" id="cd01998">
    <property type="entry name" value="MnmA_TRMU-like"/>
    <property type="match status" value="1"/>
</dbReference>
<dbReference type="FunFam" id="2.30.30.280:FF:000001">
    <property type="entry name" value="tRNA-specific 2-thiouridylase MnmA"/>
    <property type="match status" value="1"/>
</dbReference>
<dbReference type="FunFam" id="3.40.50.620:FF:000115">
    <property type="entry name" value="tRNA-specific 2-thiouridylase MnmA"/>
    <property type="match status" value="1"/>
</dbReference>
<dbReference type="Gene3D" id="2.30.30.280">
    <property type="entry name" value="Adenine nucleotide alpha hydrolases-like domains"/>
    <property type="match status" value="1"/>
</dbReference>
<dbReference type="Gene3D" id="3.40.50.620">
    <property type="entry name" value="HUPs"/>
    <property type="match status" value="1"/>
</dbReference>
<dbReference type="Gene3D" id="2.40.30.10">
    <property type="entry name" value="Translation factors"/>
    <property type="match status" value="1"/>
</dbReference>
<dbReference type="HAMAP" id="MF_00144">
    <property type="entry name" value="tRNA_thiouridyl_MnmA"/>
    <property type="match status" value="1"/>
</dbReference>
<dbReference type="InterPro" id="IPR004506">
    <property type="entry name" value="MnmA-like"/>
</dbReference>
<dbReference type="InterPro" id="IPR046885">
    <property type="entry name" value="MnmA-like_C"/>
</dbReference>
<dbReference type="InterPro" id="IPR046884">
    <property type="entry name" value="MnmA-like_central"/>
</dbReference>
<dbReference type="InterPro" id="IPR023382">
    <property type="entry name" value="MnmA-like_central_sf"/>
</dbReference>
<dbReference type="InterPro" id="IPR014729">
    <property type="entry name" value="Rossmann-like_a/b/a_fold"/>
</dbReference>
<dbReference type="NCBIfam" id="NF001138">
    <property type="entry name" value="PRK00143.1"/>
    <property type="match status" value="1"/>
</dbReference>
<dbReference type="NCBIfam" id="TIGR00420">
    <property type="entry name" value="trmU"/>
    <property type="match status" value="1"/>
</dbReference>
<dbReference type="PANTHER" id="PTHR11933:SF5">
    <property type="entry name" value="MITOCHONDRIAL TRNA-SPECIFIC 2-THIOURIDYLASE 1"/>
    <property type="match status" value="1"/>
</dbReference>
<dbReference type="PANTHER" id="PTHR11933">
    <property type="entry name" value="TRNA 5-METHYLAMINOMETHYL-2-THIOURIDYLATE -METHYLTRANSFERASE"/>
    <property type="match status" value="1"/>
</dbReference>
<dbReference type="Pfam" id="PF03054">
    <property type="entry name" value="tRNA_Me_trans"/>
    <property type="match status" value="1"/>
</dbReference>
<dbReference type="Pfam" id="PF20258">
    <property type="entry name" value="tRNA_Me_trans_C"/>
    <property type="match status" value="1"/>
</dbReference>
<dbReference type="Pfam" id="PF20259">
    <property type="entry name" value="tRNA_Me_trans_M"/>
    <property type="match status" value="1"/>
</dbReference>
<dbReference type="SUPFAM" id="SSF52402">
    <property type="entry name" value="Adenine nucleotide alpha hydrolases-like"/>
    <property type="match status" value="1"/>
</dbReference>
<name>MNMA_BARBK</name>
<keyword id="KW-0067">ATP-binding</keyword>
<keyword id="KW-0963">Cytoplasm</keyword>
<keyword id="KW-1015">Disulfide bond</keyword>
<keyword id="KW-0547">Nucleotide-binding</keyword>
<keyword id="KW-0694">RNA-binding</keyword>
<keyword id="KW-0808">Transferase</keyword>
<keyword id="KW-0819">tRNA processing</keyword>
<keyword id="KW-0820">tRNA-binding</keyword>
<accession>A1UTJ1</accession>
<feature type="chain" id="PRO_1000009509" description="tRNA-specific 2-thiouridylase MnmA">
    <location>
        <begin position="1"/>
        <end position="391"/>
    </location>
</feature>
<feature type="region of interest" description="Interaction with tRNA" evidence="1">
    <location>
        <begin position="160"/>
        <end position="162"/>
    </location>
</feature>
<feature type="active site" description="Nucleophile" evidence="1">
    <location>
        <position position="114"/>
    </location>
</feature>
<feature type="active site" description="Cysteine persulfide intermediate" evidence="1">
    <location>
        <position position="210"/>
    </location>
</feature>
<feature type="binding site" evidence="1">
    <location>
        <begin position="20"/>
        <end position="27"/>
    </location>
    <ligand>
        <name>ATP</name>
        <dbReference type="ChEBI" id="CHEBI:30616"/>
    </ligand>
</feature>
<feature type="binding site" evidence="1">
    <location>
        <position position="46"/>
    </location>
    <ligand>
        <name>ATP</name>
        <dbReference type="ChEBI" id="CHEBI:30616"/>
    </ligand>
</feature>
<feature type="binding site" evidence="1">
    <location>
        <position position="138"/>
    </location>
    <ligand>
        <name>ATP</name>
        <dbReference type="ChEBI" id="CHEBI:30616"/>
    </ligand>
</feature>
<feature type="site" description="Interaction with tRNA" evidence="1">
    <location>
        <position position="139"/>
    </location>
</feature>
<feature type="site" description="Interaction with tRNA" evidence="1">
    <location>
        <position position="352"/>
    </location>
</feature>
<feature type="disulfide bond" description="Alternate" evidence="1">
    <location>
        <begin position="114"/>
        <end position="210"/>
    </location>
</feature>
<proteinExistence type="inferred from homology"/>
<protein>
    <recommendedName>
        <fullName evidence="1">tRNA-specific 2-thiouridylase MnmA</fullName>
        <ecNumber evidence="1">2.8.1.13</ecNumber>
    </recommendedName>
</protein>
<gene>
    <name evidence="1" type="primary">mnmA</name>
    <name type="synonym">trmU</name>
    <name type="ordered locus">BARBAKC583_1016</name>
</gene>
<evidence type="ECO:0000255" key="1">
    <source>
        <dbReference type="HAMAP-Rule" id="MF_00144"/>
    </source>
</evidence>